<accession>P60786</accession>
<accession>P07682</accession>
<accession>P76590</accession>
<protein>
    <recommendedName>
        <fullName evidence="1">Elongation factor 4</fullName>
        <shortName evidence="1">EF-4</shortName>
        <ecNumber evidence="1">3.6.5.n1</ecNumber>
    </recommendedName>
    <alternativeName>
        <fullName evidence="1">Ribosomal back-translocase LepA</fullName>
    </alternativeName>
</protein>
<organism>
    <name type="scientific">Escherichia coli O6:H1 (strain CFT073 / ATCC 700928 / UPEC)</name>
    <dbReference type="NCBI Taxonomy" id="199310"/>
    <lineage>
        <taxon>Bacteria</taxon>
        <taxon>Pseudomonadati</taxon>
        <taxon>Pseudomonadota</taxon>
        <taxon>Gammaproteobacteria</taxon>
        <taxon>Enterobacterales</taxon>
        <taxon>Enterobacteriaceae</taxon>
        <taxon>Escherichia</taxon>
    </lineage>
</organism>
<dbReference type="EC" id="3.6.5.n1" evidence="1"/>
<dbReference type="EMBL" id="AE014075">
    <property type="protein sequence ID" value="AAN81542.1"/>
    <property type="molecule type" value="Genomic_DNA"/>
</dbReference>
<dbReference type="RefSeq" id="WP_000790168.1">
    <property type="nucleotide sequence ID" value="NZ_CP051263.1"/>
</dbReference>
<dbReference type="SMR" id="P60786"/>
<dbReference type="STRING" id="199310.c3093"/>
<dbReference type="GeneID" id="93774522"/>
<dbReference type="KEGG" id="ecc:c3093"/>
<dbReference type="eggNOG" id="COG0481">
    <property type="taxonomic scope" value="Bacteria"/>
</dbReference>
<dbReference type="HOGENOM" id="CLU_009995_3_3_6"/>
<dbReference type="BioCyc" id="ECOL199310:C3093-MONOMER"/>
<dbReference type="Proteomes" id="UP000001410">
    <property type="component" value="Chromosome"/>
</dbReference>
<dbReference type="GO" id="GO:0005886">
    <property type="term" value="C:plasma membrane"/>
    <property type="evidence" value="ECO:0007669"/>
    <property type="project" value="UniProtKB-SubCell"/>
</dbReference>
<dbReference type="GO" id="GO:0005525">
    <property type="term" value="F:GTP binding"/>
    <property type="evidence" value="ECO:0007669"/>
    <property type="project" value="UniProtKB-UniRule"/>
</dbReference>
<dbReference type="GO" id="GO:0003924">
    <property type="term" value="F:GTPase activity"/>
    <property type="evidence" value="ECO:0007669"/>
    <property type="project" value="UniProtKB-UniRule"/>
</dbReference>
<dbReference type="GO" id="GO:0097216">
    <property type="term" value="F:guanosine tetraphosphate binding"/>
    <property type="evidence" value="ECO:0007669"/>
    <property type="project" value="UniProtKB-ARBA"/>
</dbReference>
<dbReference type="GO" id="GO:0043022">
    <property type="term" value="F:ribosome binding"/>
    <property type="evidence" value="ECO:0007669"/>
    <property type="project" value="UniProtKB-UniRule"/>
</dbReference>
<dbReference type="GO" id="GO:0003746">
    <property type="term" value="F:translation elongation factor activity"/>
    <property type="evidence" value="ECO:0007669"/>
    <property type="project" value="UniProtKB-UniRule"/>
</dbReference>
<dbReference type="GO" id="GO:0045727">
    <property type="term" value="P:positive regulation of translation"/>
    <property type="evidence" value="ECO:0007669"/>
    <property type="project" value="UniProtKB-UniRule"/>
</dbReference>
<dbReference type="CDD" id="cd03699">
    <property type="entry name" value="EF4_II"/>
    <property type="match status" value="1"/>
</dbReference>
<dbReference type="CDD" id="cd16260">
    <property type="entry name" value="EF4_III"/>
    <property type="match status" value="1"/>
</dbReference>
<dbReference type="CDD" id="cd01890">
    <property type="entry name" value="LepA"/>
    <property type="match status" value="1"/>
</dbReference>
<dbReference type="CDD" id="cd03709">
    <property type="entry name" value="lepA_C"/>
    <property type="match status" value="1"/>
</dbReference>
<dbReference type="FunFam" id="3.30.70.240:FF:000005">
    <property type="entry name" value="Elongation factor 4"/>
    <property type="match status" value="1"/>
</dbReference>
<dbReference type="FunFam" id="3.40.50.300:FF:000078">
    <property type="entry name" value="Elongation factor 4"/>
    <property type="match status" value="1"/>
</dbReference>
<dbReference type="FunFam" id="2.40.30.10:FF:000015">
    <property type="entry name" value="Translation factor GUF1, mitochondrial"/>
    <property type="match status" value="1"/>
</dbReference>
<dbReference type="FunFam" id="3.30.70.2570:FF:000001">
    <property type="entry name" value="Translation factor GUF1, mitochondrial"/>
    <property type="match status" value="1"/>
</dbReference>
<dbReference type="FunFam" id="3.30.70.870:FF:000004">
    <property type="entry name" value="Translation factor GUF1, mitochondrial"/>
    <property type="match status" value="1"/>
</dbReference>
<dbReference type="Gene3D" id="3.30.70.240">
    <property type="match status" value="1"/>
</dbReference>
<dbReference type="Gene3D" id="3.30.70.2570">
    <property type="entry name" value="Elongation factor 4, C-terminal domain"/>
    <property type="match status" value="1"/>
</dbReference>
<dbReference type="Gene3D" id="3.30.70.870">
    <property type="entry name" value="Elongation Factor G (Translational Gtpase), domain 3"/>
    <property type="match status" value="1"/>
</dbReference>
<dbReference type="Gene3D" id="3.40.50.300">
    <property type="entry name" value="P-loop containing nucleotide triphosphate hydrolases"/>
    <property type="match status" value="1"/>
</dbReference>
<dbReference type="Gene3D" id="2.40.30.10">
    <property type="entry name" value="Translation factors"/>
    <property type="match status" value="1"/>
</dbReference>
<dbReference type="HAMAP" id="MF_00071">
    <property type="entry name" value="LepA"/>
    <property type="match status" value="1"/>
</dbReference>
<dbReference type="InterPro" id="IPR006297">
    <property type="entry name" value="EF-4"/>
</dbReference>
<dbReference type="InterPro" id="IPR035647">
    <property type="entry name" value="EFG_III/V"/>
</dbReference>
<dbReference type="InterPro" id="IPR000640">
    <property type="entry name" value="EFG_V-like"/>
</dbReference>
<dbReference type="InterPro" id="IPR004161">
    <property type="entry name" value="EFTu-like_2"/>
</dbReference>
<dbReference type="InterPro" id="IPR031157">
    <property type="entry name" value="G_TR_CS"/>
</dbReference>
<dbReference type="InterPro" id="IPR038363">
    <property type="entry name" value="LepA_C_sf"/>
</dbReference>
<dbReference type="InterPro" id="IPR013842">
    <property type="entry name" value="LepA_CTD"/>
</dbReference>
<dbReference type="InterPro" id="IPR035654">
    <property type="entry name" value="LepA_IV"/>
</dbReference>
<dbReference type="InterPro" id="IPR027417">
    <property type="entry name" value="P-loop_NTPase"/>
</dbReference>
<dbReference type="InterPro" id="IPR005225">
    <property type="entry name" value="Small_GTP-bd"/>
</dbReference>
<dbReference type="InterPro" id="IPR000795">
    <property type="entry name" value="T_Tr_GTP-bd_dom"/>
</dbReference>
<dbReference type="NCBIfam" id="TIGR01393">
    <property type="entry name" value="lepA"/>
    <property type="match status" value="1"/>
</dbReference>
<dbReference type="NCBIfam" id="TIGR00231">
    <property type="entry name" value="small_GTP"/>
    <property type="match status" value="1"/>
</dbReference>
<dbReference type="PANTHER" id="PTHR43512:SF4">
    <property type="entry name" value="TRANSLATION FACTOR GUF1 HOMOLOG, CHLOROPLASTIC"/>
    <property type="match status" value="1"/>
</dbReference>
<dbReference type="PANTHER" id="PTHR43512">
    <property type="entry name" value="TRANSLATION FACTOR GUF1-RELATED"/>
    <property type="match status" value="1"/>
</dbReference>
<dbReference type="Pfam" id="PF00679">
    <property type="entry name" value="EFG_C"/>
    <property type="match status" value="1"/>
</dbReference>
<dbReference type="Pfam" id="PF00009">
    <property type="entry name" value="GTP_EFTU"/>
    <property type="match status" value="1"/>
</dbReference>
<dbReference type="Pfam" id="PF03144">
    <property type="entry name" value="GTP_EFTU_D2"/>
    <property type="match status" value="1"/>
</dbReference>
<dbReference type="Pfam" id="PF06421">
    <property type="entry name" value="LepA_C"/>
    <property type="match status" value="1"/>
</dbReference>
<dbReference type="PRINTS" id="PR00315">
    <property type="entry name" value="ELONGATNFCT"/>
</dbReference>
<dbReference type="SUPFAM" id="SSF54980">
    <property type="entry name" value="EF-G C-terminal domain-like"/>
    <property type="match status" value="2"/>
</dbReference>
<dbReference type="SUPFAM" id="SSF52540">
    <property type="entry name" value="P-loop containing nucleoside triphosphate hydrolases"/>
    <property type="match status" value="1"/>
</dbReference>
<dbReference type="PROSITE" id="PS00301">
    <property type="entry name" value="G_TR_1"/>
    <property type="match status" value="1"/>
</dbReference>
<dbReference type="PROSITE" id="PS51722">
    <property type="entry name" value="G_TR_2"/>
    <property type="match status" value="1"/>
</dbReference>
<proteinExistence type="inferred from homology"/>
<comment type="function">
    <text evidence="1">Required for accurate and efficient protein synthesis under certain stress conditions. May act as a fidelity factor of the translation reaction, by catalyzing a one-codon backward translocation of tRNAs on improperly translocated ribosomes. Back-translocation proceeds from a post-translocation (POST) complex to a pre-translocation (PRE) complex, thus giving elongation factor G a second chance to translocate the tRNAs correctly. Binds to ribosomes in a GTP-dependent manner.</text>
</comment>
<comment type="catalytic activity">
    <reaction evidence="1">
        <text>GTP + H2O = GDP + phosphate + H(+)</text>
        <dbReference type="Rhea" id="RHEA:19669"/>
        <dbReference type="ChEBI" id="CHEBI:15377"/>
        <dbReference type="ChEBI" id="CHEBI:15378"/>
        <dbReference type="ChEBI" id="CHEBI:37565"/>
        <dbReference type="ChEBI" id="CHEBI:43474"/>
        <dbReference type="ChEBI" id="CHEBI:58189"/>
        <dbReference type="EC" id="3.6.5.n1"/>
    </reaction>
</comment>
<comment type="subcellular location">
    <subcellularLocation>
        <location evidence="1">Cell inner membrane</location>
        <topology evidence="1">Peripheral membrane protein</topology>
        <orientation evidence="1">Cytoplasmic side</orientation>
    </subcellularLocation>
</comment>
<comment type="similarity">
    <text evidence="1">Belongs to the TRAFAC class translation factor GTPase superfamily. Classic translation factor GTPase family. LepA subfamily.</text>
</comment>
<keyword id="KW-0997">Cell inner membrane</keyword>
<keyword id="KW-1003">Cell membrane</keyword>
<keyword id="KW-0342">GTP-binding</keyword>
<keyword id="KW-0378">Hydrolase</keyword>
<keyword id="KW-0472">Membrane</keyword>
<keyword id="KW-0547">Nucleotide-binding</keyword>
<keyword id="KW-0648">Protein biosynthesis</keyword>
<keyword id="KW-1185">Reference proteome</keyword>
<reference key="1">
    <citation type="journal article" date="2002" name="Proc. Natl. Acad. Sci. U.S.A.">
        <title>Extensive mosaic structure revealed by the complete genome sequence of uropathogenic Escherichia coli.</title>
        <authorList>
            <person name="Welch R.A."/>
            <person name="Burland V."/>
            <person name="Plunkett G. III"/>
            <person name="Redford P."/>
            <person name="Roesch P."/>
            <person name="Rasko D."/>
            <person name="Buckles E.L."/>
            <person name="Liou S.-R."/>
            <person name="Boutin A."/>
            <person name="Hackett J."/>
            <person name="Stroud D."/>
            <person name="Mayhew G.F."/>
            <person name="Rose D.J."/>
            <person name="Zhou S."/>
            <person name="Schwartz D.C."/>
            <person name="Perna N.T."/>
            <person name="Mobley H.L.T."/>
            <person name="Donnenberg M.S."/>
            <person name="Blattner F.R."/>
        </authorList>
    </citation>
    <scope>NUCLEOTIDE SEQUENCE [LARGE SCALE GENOMIC DNA]</scope>
    <source>
        <strain>CFT073 / ATCC 700928 / UPEC</strain>
    </source>
</reference>
<name>LEPA_ECOL6</name>
<sequence length="599" mass="66570">MKNIRNFSIIAHIDHGKSTLSDRIIQICGGLSDREMEAQVLDSMDLERERGITIKAQSVTLDYKASDGETYQLNFIDTPGHVDFSYEVSRSLAACEGALLVVDAGQGVEAQTLANCYTAMEMDLEVVPVLNKIDLPAADPERVAEEIEDIVGIDATDAVRCSAKTGVGVQDVLERLVRDIPPPEGDPEGPLQALIIDSWFDNYLGVVSLIRIKNGTLRKGDKVKVMSTGQTYNADRLGIFTPKQVDRTELKCGEVGWLVCAIKDIHGAPVGDTLTLARNPAEKALPGFKKVKPQVYAGLFPVSSDDYEAFRDALGKLSLNDASLFYEPESSSALGFGFRCGFLGLLHMEIIQERLEREYDLDLITTAPTVVYEVETTSREVIYVDSPSKLPAVNNIYELREPIAECHMLLPQAYLGNVITLCVEKRGVQTNMVYHGNQVALTYEIPMAEVVLDFFDRLKSTSRGYASLDYNFKRFQASDMVRVDVLINGERVDALALITHRDNSQNRGRELVEKMKDLIPRQQFDIAIQAAIGTHIIARSTVKQLRKNVLAKCYGGDISRKKKLLQKQKEGKKRMKQIGNVELPQEAFLAILHVGKDNK</sequence>
<gene>
    <name evidence="1" type="primary">lepA</name>
    <name type="ordered locus">c3093</name>
</gene>
<feature type="chain" id="PRO_0000176272" description="Elongation factor 4">
    <location>
        <begin position="1"/>
        <end position="599"/>
    </location>
</feature>
<feature type="domain" description="tr-type G">
    <location>
        <begin position="2"/>
        <end position="184"/>
    </location>
</feature>
<feature type="binding site" evidence="1">
    <location>
        <begin position="14"/>
        <end position="19"/>
    </location>
    <ligand>
        <name>GTP</name>
        <dbReference type="ChEBI" id="CHEBI:37565"/>
    </ligand>
</feature>
<feature type="binding site" evidence="1">
    <location>
        <begin position="131"/>
        <end position="134"/>
    </location>
    <ligand>
        <name>GTP</name>
        <dbReference type="ChEBI" id="CHEBI:37565"/>
    </ligand>
</feature>
<evidence type="ECO:0000255" key="1">
    <source>
        <dbReference type="HAMAP-Rule" id="MF_00071"/>
    </source>
</evidence>